<sequence length="451" mass="51162">MKKHLHEIKMLLKITIPIFLAQISQTSMSLINSIMIGHLKENNIAAISVGISIWSPIILFGHGLLLSLVPTVSRIHGSGKINKIPEQINNAYWLATLISLVIMIVLWNSDVIIHTISQVNPIIEQESIKYIRILLWSTPGYLYFQVIQNQCEGLLKPKPAMVIGLIGLLFNIVVSYTLISEKFHCFNYGSTGCGISAIIVYWFMFIAMKKITKNDILINYNIKNKNISNLEMYLPNYKIIWNLFKMGFPIALSLFCEITLFTLITLLIASMETFQIIAHQIALNISSTIFILPLSIATAASIRLGFYLGKKSFSKISTIILSSQIIGLIISTTISTFIILFHYQIITLYTKNANIIKLTKQMLFITASYQIFDFFQIIGNGILRSYKDTNIIFIITCTSYWIVGFPFGYFLALTNYIVPHMGAIGFWYGILIALITSSIMILFRIYILQKK</sequence>
<reference key="1">
    <citation type="journal article" date="2003" name="Proc. Natl. Acad. Sci. U.S.A.">
        <title>Reductive genome evolution in Buchnera aphidicola.</title>
        <authorList>
            <person name="van Ham R.C.H.J."/>
            <person name="Kamerbeek J."/>
            <person name="Palacios C."/>
            <person name="Rausell C."/>
            <person name="Abascal F."/>
            <person name="Bastolla U."/>
            <person name="Fernandez J.M."/>
            <person name="Jimenez L."/>
            <person name="Postigo M."/>
            <person name="Silva F.J."/>
            <person name="Tamames J."/>
            <person name="Viguera E."/>
            <person name="Latorre A."/>
            <person name="Valencia A."/>
            <person name="Moran F."/>
            <person name="Moya A."/>
        </authorList>
    </citation>
    <scope>NUCLEOTIDE SEQUENCE [LARGE SCALE GENOMIC DNA]</scope>
    <source>
        <strain>Bp</strain>
    </source>
</reference>
<proteinExistence type="inferred from homology"/>
<comment type="function">
    <text evidence="1">Multidrug efflux pump.</text>
</comment>
<comment type="subcellular location">
    <subcellularLocation>
        <location evidence="1">Cell membrane</location>
        <topology evidence="1">Multi-pass membrane protein</topology>
    </subcellularLocation>
</comment>
<comment type="similarity">
    <text evidence="3">Belongs to the multi antimicrobial extrusion (MATE) (TC 2.A.66.1) family.</text>
</comment>
<gene>
    <name type="primary">norM</name>
    <name type="ordered locus">bbp_106</name>
</gene>
<accession>Q89AX2</accession>
<protein>
    <recommendedName>
        <fullName>Probable multidrug resistance protein NorM</fullName>
    </recommendedName>
    <alternativeName>
        <fullName>Multidrug-efflux transporter</fullName>
    </alternativeName>
</protein>
<dbReference type="EMBL" id="AE016826">
    <property type="protein sequence ID" value="AAO26840.1"/>
    <property type="molecule type" value="Genomic_DNA"/>
</dbReference>
<dbReference type="RefSeq" id="WP_011091241.1">
    <property type="nucleotide sequence ID" value="NC_004545.1"/>
</dbReference>
<dbReference type="SMR" id="Q89AX2"/>
<dbReference type="STRING" id="224915.bbp_106"/>
<dbReference type="KEGG" id="bab:bbp_106"/>
<dbReference type="eggNOG" id="COG0534">
    <property type="taxonomic scope" value="Bacteria"/>
</dbReference>
<dbReference type="HOGENOM" id="CLU_012893_6_0_6"/>
<dbReference type="OrthoDB" id="9780160at2"/>
<dbReference type="Proteomes" id="UP000000601">
    <property type="component" value="Chromosome"/>
</dbReference>
<dbReference type="GO" id="GO:0005886">
    <property type="term" value="C:plasma membrane"/>
    <property type="evidence" value="ECO:0007669"/>
    <property type="project" value="UniProtKB-SubCell"/>
</dbReference>
<dbReference type="GO" id="GO:0015297">
    <property type="term" value="F:antiporter activity"/>
    <property type="evidence" value="ECO:0007669"/>
    <property type="project" value="UniProtKB-KW"/>
</dbReference>
<dbReference type="GO" id="GO:0042910">
    <property type="term" value="F:xenobiotic transmembrane transporter activity"/>
    <property type="evidence" value="ECO:0007669"/>
    <property type="project" value="InterPro"/>
</dbReference>
<dbReference type="GO" id="GO:0006811">
    <property type="term" value="P:monoatomic ion transport"/>
    <property type="evidence" value="ECO:0007669"/>
    <property type="project" value="UniProtKB-KW"/>
</dbReference>
<dbReference type="CDD" id="cd13131">
    <property type="entry name" value="MATE_NorM_like"/>
    <property type="match status" value="1"/>
</dbReference>
<dbReference type="InterPro" id="IPR002528">
    <property type="entry name" value="MATE_fam"/>
</dbReference>
<dbReference type="InterPro" id="IPR050222">
    <property type="entry name" value="MATE_MdtK"/>
</dbReference>
<dbReference type="NCBIfam" id="TIGR00797">
    <property type="entry name" value="matE"/>
    <property type="match status" value="1"/>
</dbReference>
<dbReference type="PANTHER" id="PTHR43298:SF2">
    <property type="entry name" value="FMN_FAD EXPORTER YEEO-RELATED"/>
    <property type="match status" value="1"/>
</dbReference>
<dbReference type="PANTHER" id="PTHR43298">
    <property type="entry name" value="MULTIDRUG RESISTANCE PROTEIN NORM-RELATED"/>
    <property type="match status" value="1"/>
</dbReference>
<dbReference type="Pfam" id="PF01554">
    <property type="entry name" value="MatE"/>
    <property type="match status" value="2"/>
</dbReference>
<keyword id="KW-0050">Antiport</keyword>
<keyword id="KW-1003">Cell membrane</keyword>
<keyword id="KW-0406">Ion transport</keyword>
<keyword id="KW-0472">Membrane</keyword>
<keyword id="KW-1185">Reference proteome</keyword>
<keyword id="KW-0812">Transmembrane</keyword>
<keyword id="KW-1133">Transmembrane helix</keyword>
<keyword id="KW-0813">Transport</keyword>
<organism>
    <name type="scientific">Buchnera aphidicola subsp. Baizongia pistaciae (strain Bp)</name>
    <dbReference type="NCBI Taxonomy" id="224915"/>
    <lineage>
        <taxon>Bacteria</taxon>
        <taxon>Pseudomonadati</taxon>
        <taxon>Pseudomonadota</taxon>
        <taxon>Gammaproteobacteria</taxon>
        <taxon>Enterobacterales</taxon>
        <taxon>Erwiniaceae</taxon>
        <taxon>Buchnera</taxon>
    </lineage>
</organism>
<name>NORM_BUCBP</name>
<evidence type="ECO:0000250" key="1"/>
<evidence type="ECO:0000255" key="2"/>
<evidence type="ECO:0000305" key="3"/>
<feature type="chain" id="PRO_0000164210" description="Probable multidrug resistance protein NorM">
    <location>
        <begin position="1"/>
        <end position="451"/>
    </location>
</feature>
<feature type="transmembrane region" description="Helical" evidence="2">
    <location>
        <begin position="44"/>
        <end position="66"/>
    </location>
</feature>
<feature type="transmembrane region" description="Helical" evidence="2">
    <location>
        <begin position="92"/>
        <end position="109"/>
    </location>
</feature>
<feature type="transmembrane region" description="Helical" evidence="2">
    <location>
        <begin position="130"/>
        <end position="147"/>
    </location>
</feature>
<feature type="transmembrane region" description="Helical" evidence="2">
    <location>
        <begin position="162"/>
        <end position="179"/>
    </location>
</feature>
<feature type="transmembrane region" description="Helical" evidence="2">
    <location>
        <begin position="186"/>
        <end position="208"/>
    </location>
</feature>
<feature type="transmembrane region" description="Helical" evidence="2">
    <location>
        <begin position="247"/>
        <end position="269"/>
    </location>
</feature>
<feature type="transmembrane region" description="Helical" evidence="2">
    <location>
        <begin position="282"/>
        <end position="304"/>
    </location>
</feature>
<feature type="transmembrane region" description="Helical" evidence="2">
    <location>
        <begin position="319"/>
        <end position="341"/>
    </location>
</feature>
<feature type="transmembrane region" description="Helical" evidence="2">
    <location>
        <begin position="391"/>
        <end position="413"/>
    </location>
</feature>
<feature type="transmembrane region" description="Helical" evidence="2">
    <location>
        <begin position="423"/>
        <end position="445"/>
    </location>
</feature>